<dbReference type="EMBL" id="AJ414696">
    <property type="protein sequence ID" value="CAC93959.1"/>
    <property type="molecule type" value="Genomic_DNA"/>
</dbReference>
<dbReference type="EMBL" id="AJ703802">
    <property type="protein sequence ID" value="CAG28276.1"/>
    <property type="molecule type" value="Genomic_DNA"/>
</dbReference>
<dbReference type="EMBL" id="AJ748296">
    <property type="protein sequence ID" value="CAG38824.1"/>
    <property type="molecule type" value="Genomic_DNA"/>
</dbReference>
<dbReference type="RefSeq" id="NP_666592.1">
    <property type="nucleotide sequence ID" value="NC_004087.1"/>
</dbReference>
<dbReference type="SMR" id="Q8QL50"/>
<dbReference type="KEGG" id="vg:951400"/>
<dbReference type="OrthoDB" id="36766at10239"/>
<dbReference type="Proteomes" id="UP000002270">
    <property type="component" value="Genome"/>
</dbReference>
<dbReference type="Proteomes" id="UP000223181">
    <property type="component" value="Segment"/>
</dbReference>
<organism>
    <name type="scientific">Sulfolobus islandicus rod-shaped virus 1</name>
    <name type="common">SIRV-1</name>
    <name type="synonym">Sulfolobus virus SIRV-1</name>
    <dbReference type="NCBI Taxonomy" id="157898"/>
    <lineage>
        <taxon>Viruses</taxon>
        <taxon>Adnaviria</taxon>
        <taxon>Zilligvirae</taxon>
        <taxon>Taleaviricota</taxon>
        <taxon>Tokiviricetes</taxon>
        <taxon>Ligamenvirales</taxon>
        <taxon>Rudiviridae</taxon>
        <taxon>Icerudivirus</taxon>
        <taxon>Icerudivirus SIRV1</taxon>
    </lineage>
</organism>
<sequence>MSYIEKLGDNMVKRLKILIDNEFSNLIIEFKRNVKKSFEGEAFVTIGIDENDKISYISIEPLDKDLKEGIKRIKVL</sequence>
<reference key="1">
    <citation type="journal article" date="2001" name="Virology">
        <title>Sequences and replication of genomes of the archaeal rudiviruses SIRV1 and SIRV2: relationships to the archaeal lipothrixvirus SIFV and some eukaryal viruses.</title>
        <authorList>
            <person name="Peng X."/>
            <person name="Blum H."/>
            <person name="She Q."/>
            <person name="Mallok S."/>
            <person name="Bruegger K."/>
            <person name="Garrett R.A."/>
            <person name="Zillig W."/>
            <person name="Prangishvili D."/>
        </authorList>
    </citation>
    <scope>NUCLEOTIDE SEQUENCE [LARGE SCALE GENOMIC DNA]</scope>
    <source>
        <strain>Isolate variant VIII</strain>
    </source>
</reference>
<reference key="2">
    <citation type="journal article" date="2004" name="Mol. Microbiol.">
        <title>Multiple variants of the archaeal DNA rudivirus SIRV1 in a single host and a novel mechanism of genomic variation.</title>
        <authorList>
            <person name="Peng X."/>
            <person name="Kessler A."/>
            <person name="Phan H."/>
            <person name="Garrett R.A."/>
            <person name="Prangishvili D."/>
        </authorList>
    </citation>
    <scope>NUCLEOTIDE SEQUENCE [LARGE SCALE GENOMIC DNA]</scope>
    <source>
        <strain>Isolate variant II</strain>
        <strain>Isolate variant XX</strain>
    </source>
</reference>
<accession>Q8QL50</accession>
<accession>Q5TJB4</accession>
<accession>Q5W357</accession>
<gene>
    <name type="ORF">76</name>
</gene>
<organismHost>
    <name type="scientific">Saccharolobus islandicus</name>
    <name type="common">Sulfolobus islandicus</name>
    <dbReference type="NCBI Taxonomy" id="43080"/>
</organismHost>
<name>Y76_SIRV1</name>
<keyword id="KW-1185">Reference proteome</keyword>
<feature type="chain" id="PRO_0000342328" description="Uncharacterized protein 76">
    <location>
        <begin position="1"/>
        <end position="76"/>
    </location>
</feature>
<feature type="sequence variant" description="In strain: Isolate variant II.">
    <original>S</original>
    <variation>D</variation>
    <location>
        <position position="24"/>
    </location>
</feature>
<feature type="sequence variant" description="In strain: Isolate variant II.">
    <original>R</original>
    <variation>K</variation>
    <location>
        <position position="72"/>
    </location>
</feature>
<proteinExistence type="predicted"/>
<protein>
    <recommendedName>
        <fullName>Uncharacterized protein 76</fullName>
    </recommendedName>
</protein>